<accession>A4J053</accession>
<protein>
    <recommendedName>
        <fullName evidence="2">D-alanine--D-alanine ligase</fullName>
        <ecNumber evidence="2">6.3.2.4</ecNumber>
    </recommendedName>
    <alternativeName>
        <fullName evidence="2">D-Ala-D-Ala ligase</fullName>
    </alternativeName>
    <alternativeName>
        <fullName evidence="2">D-alanylalanine synthetase</fullName>
    </alternativeName>
</protein>
<gene>
    <name evidence="2" type="primary">ddl</name>
    <name type="ordered locus">FTW_1906</name>
</gene>
<feature type="chain" id="PRO_0000341100" description="D-alanine--D-alanine ligase">
    <location>
        <begin position="1"/>
        <end position="296"/>
    </location>
</feature>
<feature type="domain" description="ATP-grasp" evidence="2">
    <location>
        <begin position="103"/>
        <end position="293"/>
    </location>
</feature>
<feature type="binding site" evidence="2">
    <location>
        <begin position="129"/>
        <end position="180"/>
    </location>
    <ligand>
        <name>ATP</name>
        <dbReference type="ChEBI" id="CHEBI:30616"/>
    </ligand>
</feature>
<feature type="binding site" evidence="2">
    <location>
        <position position="247"/>
    </location>
    <ligand>
        <name>Mg(2+)</name>
        <dbReference type="ChEBI" id="CHEBI:18420"/>
        <label>1</label>
    </ligand>
</feature>
<feature type="binding site" evidence="2">
    <location>
        <position position="260"/>
    </location>
    <ligand>
        <name>Mg(2+)</name>
        <dbReference type="ChEBI" id="CHEBI:18420"/>
        <label>1</label>
    </ligand>
</feature>
<feature type="binding site" evidence="2">
    <location>
        <position position="260"/>
    </location>
    <ligand>
        <name>Mg(2+)</name>
        <dbReference type="ChEBI" id="CHEBI:18420"/>
        <label>2</label>
    </ligand>
</feature>
<feature type="binding site" evidence="2">
    <location>
        <position position="262"/>
    </location>
    <ligand>
        <name>Mg(2+)</name>
        <dbReference type="ChEBI" id="CHEBI:18420"/>
        <label>2</label>
    </ligand>
</feature>
<reference key="1">
    <citation type="journal article" date="2007" name="PLoS ONE">
        <title>Complete genomic characterization of a pathogenic A.II strain of Francisella tularensis subspecies tularensis.</title>
        <authorList>
            <person name="Beckstrom-Sternberg S.M."/>
            <person name="Auerbach R.K."/>
            <person name="Godbole S."/>
            <person name="Pearson J.V."/>
            <person name="Beckstrom-Sternberg J.S."/>
            <person name="Deng Z."/>
            <person name="Munk C."/>
            <person name="Kubota K."/>
            <person name="Zhou Y."/>
            <person name="Bruce D."/>
            <person name="Noronha J."/>
            <person name="Scheuermann R.H."/>
            <person name="Wang A."/>
            <person name="Wei X."/>
            <person name="Wang J."/>
            <person name="Hao J."/>
            <person name="Wagner D.M."/>
            <person name="Brettin T.S."/>
            <person name="Brown N."/>
            <person name="Gilna P."/>
            <person name="Keim P.S."/>
        </authorList>
    </citation>
    <scope>NUCLEOTIDE SEQUENCE [LARGE SCALE GENOMIC DNA]</scope>
    <source>
        <strain>WY96-3418</strain>
    </source>
</reference>
<name>DDL_FRATW</name>
<dbReference type="EC" id="6.3.2.4" evidence="2"/>
<dbReference type="EMBL" id="CP000608">
    <property type="protein sequence ID" value="ABO47555.1"/>
    <property type="molecule type" value="Genomic_DNA"/>
</dbReference>
<dbReference type="RefSeq" id="WP_003031053.1">
    <property type="nucleotide sequence ID" value="NC_009257.1"/>
</dbReference>
<dbReference type="SMR" id="A4J053"/>
<dbReference type="KEGG" id="ftw:FTW_1906"/>
<dbReference type="HOGENOM" id="CLU_039268_1_1_6"/>
<dbReference type="UniPathway" id="UPA00219"/>
<dbReference type="GO" id="GO:0005737">
    <property type="term" value="C:cytoplasm"/>
    <property type="evidence" value="ECO:0007669"/>
    <property type="project" value="UniProtKB-SubCell"/>
</dbReference>
<dbReference type="GO" id="GO:0005524">
    <property type="term" value="F:ATP binding"/>
    <property type="evidence" value="ECO:0007669"/>
    <property type="project" value="UniProtKB-KW"/>
</dbReference>
<dbReference type="GO" id="GO:0008716">
    <property type="term" value="F:D-alanine-D-alanine ligase activity"/>
    <property type="evidence" value="ECO:0007669"/>
    <property type="project" value="UniProtKB-UniRule"/>
</dbReference>
<dbReference type="GO" id="GO:0046872">
    <property type="term" value="F:metal ion binding"/>
    <property type="evidence" value="ECO:0007669"/>
    <property type="project" value="UniProtKB-KW"/>
</dbReference>
<dbReference type="GO" id="GO:0071555">
    <property type="term" value="P:cell wall organization"/>
    <property type="evidence" value="ECO:0007669"/>
    <property type="project" value="UniProtKB-KW"/>
</dbReference>
<dbReference type="GO" id="GO:0009252">
    <property type="term" value="P:peptidoglycan biosynthetic process"/>
    <property type="evidence" value="ECO:0007669"/>
    <property type="project" value="UniProtKB-UniRule"/>
</dbReference>
<dbReference type="GO" id="GO:0008360">
    <property type="term" value="P:regulation of cell shape"/>
    <property type="evidence" value="ECO:0007669"/>
    <property type="project" value="UniProtKB-KW"/>
</dbReference>
<dbReference type="Gene3D" id="3.40.50.20">
    <property type="match status" value="1"/>
</dbReference>
<dbReference type="Gene3D" id="3.30.1490.20">
    <property type="entry name" value="ATP-grasp fold, A domain"/>
    <property type="match status" value="1"/>
</dbReference>
<dbReference type="Gene3D" id="3.30.470.20">
    <property type="entry name" value="ATP-grasp fold, B domain"/>
    <property type="match status" value="1"/>
</dbReference>
<dbReference type="HAMAP" id="MF_00047">
    <property type="entry name" value="Dala_Dala_lig"/>
    <property type="match status" value="1"/>
</dbReference>
<dbReference type="InterPro" id="IPR011761">
    <property type="entry name" value="ATP-grasp"/>
</dbReference>
<dbReference type="InterPro" id="IPR013815">
    <property type="entry name" value="ATP_grasp_subdomain_1"/>
</dbReference>
<dbReference type="InterPro" id="IPR000291">
    <property type="entry name" value="D-Ala_lig_Van_CS"/>
</dbReference>
<dbReference type="InterPro" id="IPR005905">
    <property type="entry name" value="D_ala_D_ala"/>
</dbReference>
<dbReference type="InterPro" id="IPR011095">
    <property type="entry name" value="Dala_Dala_lig_C"/>
</dbReference>
<dbReference type="InterPro" id="IPR016185">
    <property type="entry name" value="PreATP-grasp_dom_sf"/>
</dbReference>
<dbReference type="NCBIfam" id="TIGR01205">
    <property type="entry name" value="D_ala_D_alaTIGR"/>
    <property type="match status" value="1"/>
</dbReference>
<dbReference type="NCBIfam" id="NF002378">
    <property type="entry name" value="PRK01372.1"/>
    <property type="match status" value="1"/>
</dbReference>
<dbReference type="NCBIfam" id="NF011167">
    <property type="entry name" value="PRK14569.1"/>
    <property type="match status" value="1"/>
</dbReference>
<dbReference type="PANTHER" id="PTHR23132">
    <property type="entry name" value="D-ALANINE--D-ALANINE LIGASE"/>
    <property type="match status" value="1"/>
</dbReference>
<dbReference type="PANTHER" id="PTHR23132:SF23">
    <property type="entry name" value="D-ALANINE--D-ALANINE LIGASE B"/>
    <property type="match status" value="1"/>
</dbReference>
<dbReference type="Pfam" id="PF07478">
    <property type="entry name" value="Dala_Dala_lig_C"/>
    <property type="match status" value="1"/>
</dbReference>
<dbReference type="PIRSF" id="PIRSF039102">
    <property type="entry name" value="Ddl/VanB"/>
    <property type="match status" value="1"/>
</dbReference>
<dbReference type="SUPFAM" id="SSF56059">
    <property type="entry name" value="Glutathione synthetase ATP-binding domain-like"/>
    <property type="match status" value="1"/>
</dbReference>
<dbReference type="SUPFAM" id="SSF52440">
    <property type="entry name" value="PreATP-grasp domain"/>
    <property type="match status" value="1"/>
</dbReference>
<dbReference type="PROSITE" id="PS50975">
    <property type="entry name" value="ATP_GRASP"/>
    <property type="match status" value="1"/>
</dbReference>
<dbReference type="PROSITE" id="PS00843">
    <property type="entry name" value="DALA_DALA_LIGASE_1"/>
    <property type="match status" value="1"/>
</dbReference>
<dbReference type="PROSITE" id="PS00844">
    <property type="entry name" value="DALA_DALA_LIGASE_2"/>
    <property type="match status" value="1"/>
</dbReference>
<proteinExistence type="inferred from homology"/>
<comment type="function">
    <text evidence="2">Cell wall formation.</text>
</comment>
<comment type="catalytic activity">
    <reaction evidence="2">
        <text>2 D-alanine + ATP = D-alanyl-D-alanine + ADP + phosphate + H(+)</text>
        <dbReference type="Rhea" id="RHEA:11224"/>
        <dbReference type="ChEBI" id="CHEBI:15378"/>
        <dbReference type="ChEBI" id="CHEBI:30616"/>
        <dbReference type="ChEBI" id="CHEBI:43474"/>
        <dbReference type="ChEBI" id="CHEBI:57416"/>
        <dbReference type="ChEBI" id="CHEBI:57822"/>
        <dbReference type="ChEBI" id="CHEBI:456216"/>
        <dbReference type="EC" id="6.3.2.4"/>
    </reaction>
</comment>
<comment type="cofactor">
    <cofactor evidence="1">
        <name>Mg(2+)</name>
        <dbReference type="ChEBI" id="CHEBI:18420"/>
    </cofactor>
    <cofactor evidence="1">
        <name>Mn(2+)</name>
        <dbReference type="ChEBI" id="CHEBI:29035"/>
    </cofactor>
    <text evidence="1">Binds 2 magnesium or manganese ions per subunit.</text>
</comment>
<comment type="pathway">
    <text evidence="2">Cell wall biogenesis; peptidoglycan biosynthesis.</text>
</comment>
<comment type="subcellular location">
    <subcellularLocation>
        <location evidence="2">Cytoplasm</location>
    </subcellularLocation>
</comment>
<comment type="similarity">
    <text evidence="2">Belongs to the D-alanine--D-alanine ligase family.</text>
</comment>
<evidence type="ECO:0000250" key="1"/>
<evidence type="ECO:0000255" key="2">
    <source>
        <dbReference type="HAMAP-Rule" id="MF_00047"/>
    </source>
</evidence>
<keyword id="KW-0067">ATP-binding</keyword>
<keyword id="KW-0133">Cell shape</keyword>
<keyword id="KW-0961">Cell wall biogenesis/degradation</keyword>
<keyword id="KW-0963">Cytoplasm</keyword>
<keyword id="KW-0436">Ligase</keyword>
<keyword id="KW-0460">Magnesium</keyword>
<keyword id="KW-0464">Manganese</keyword>
<keyword id="KW-0479">Metal-binding</keyword>
<keyword id="KW-0547">Nucleotide-binding</keyword>
<keyword id="KW-0573">Peptidoglycan synthesis</keyword>
<organism>
    <name type="scientific">Francisella tularensis subsp. tularensis (strain WY96-3418)</name>
    <dbReference type="NCBI Taxonomy" id="418136"/>
    <lineage>
        <taxon>Bacteria</taxon>
        <taxon>Pseudomonadati</taxon>
        <taxon>Pseudomonadota</taxon>
        <taxon>Gammaproteobacteria</taxon>
        <taxon>Thiotrichales</taxon>
        <taxon>Francisellaceae</taxon>
        <taxon>Francisella</taxon>
    </lineage>
</organism>
<sequence length="296" mass="32798">MKNEKIVVLYGGDSPEREVSLKSGKAVLDSLISQGYDAVGVDASGKELVAKLLELKPDKCFVALHGEDGENGRVSALLEMLEIKHTSSSMKSSVITMDKMISKEILMHYRMPTPMAKFLTDKLVAEDEISFPVAVKPSSGGSSIATFKVKSIQELKHAYEEASKYGEVMIEQWVTGKEITVAIVNDEVYSSVWIEPQNEFYDYESKYSGKSIYHSPSGLCEQKELEVRQLAKKAYDLLGCSGHARVDFIYDDRGNFYIMEINSSPGMTDNSLSPKSAAAEGVDFDSFVKRIIEQAQ</sequence>